<reference key="1">
    <citation type="journal article" date="2001" name="Plant J.">
        <title>Nicotianamine synthase gene expression differs in barley and rice under Fe-deficient conditions.</title>
        <authorList>
            <person name="Higuchi K."/>
            <person name="Watanabe S."/>
            <person name="Takahashi M."/>
            <person name="Kawasaki S."/>
            <person name="Nakanishi H."/>
            <person name="Nishizawa N.-K."/>
            <person name="Mori S."/>
        </authorList>
    </citation>
    <scope>NUCLEOTIDE SEQUENCE [MRNA]</scope>
    <source>
        <strain>cv. IR36</strain>
        <tissue>Root</tissue>
    </source>
</reference>
<reference key="2">
    <citation type="journal article" date="2005" name="PLoS Biol.">
        <title>The genomes of Oryza sativa: a history of duplications.</title>
        <authorList>
            <person name="Yu J."/>
            <person name="Wang J."/>
            <person name="Lin W."/>
            <person name="Li S."/>
            <person name="Li H."/>
            <person name="Zhou J."/>
            <person name="Ni P."/>
            <person name="Dong W."/>
            <person name="Hu S."/>
            <person name="Zeng C."/>
            <person name="Zhang J."/>
            <person name="Zhang Y."/>
            <person name="Li R."/>
            <person name="Xu Z."/>
            <person name="Li S."/>
            <person name="Li X."/>
            <person name="Zheng H."/>
            <person name="Cong L."/>
            <person name="Lin L."/>
            <person name="Yin J."/>
            <person name="Geng J."/>
            <person name="Li G."/>
            <person name="Shi J."/>
            <person name="Liu J."/>
            <person name="Lv H."/>
            <person name="Li J."/>
            <person name="Wang J."/>
            <person name="Deng Y."/>
            <person name="Ran L."/>
            <person name="Shi X."/>
            <person name="Wang X."/>
            <person name="Wu Q."/>
            <person name="Li C."/>
            <person name="Ren X."/>
            <person name="Wang J."/>
            <person name="Wang X."/>
            <person name="Li D."/>
            <person name="Liu D."/>
            <person name="Zhang X."/>
            <person name="Ji Z."/>
            <person name="Zhao W."/>
            <person name="Sun Y."/>
            <person name="Zhang Z."/>
            <person name="Bao J."/>
            <person name="Han Y."/>
            <person name="Dong L."/>
            <person name="Ji J."/>
            <person name="Chen P."/>
            <person name="Wu S."/>
            <person name="Liu J."/>
            <person name="Xiao Y."/>
            <person name="Bu D."/>
            <person name="Tan J."/>
            <person name="Yang L."/>
            <person name="Ye C."/>
            <person name="Zhang J."/>
            <person name="Xu J."/>
            <person name="Zhou Y."/>
            <person name="Yu Y."/>
            <person name="Zhang B."/>
            <person name="Zhuang S."/>
            <person name="Wei H."/>
            <person name="Liu B."/>
            <person name="Lei M."/>
            <person name="Yu H."/>
            <person name="Li Y."/>
            <person name="Xu H."/>
            <person name="Wei S."/>
            <person name="He X."/>
            <person name="Fang L."/>
            <person name="Zhang Z."/>
            <person name="Zhang Y."/>
            <person name="Huang X."/>
            <person name="Su Z."/>
            <person name="Tong W."/>
            <person name="Li J."/>
            <person name="Tong Z."/>
            <person name="Li S."/>
            <person name="Ye J."/>
            <person name="Wang L."/>
            <person name="Fang L."/>
            <person name="Lei T."/>
            <person name="Chen C.-S."/>
            <person name="Chen H.-C."/>
            <person name="Xu Z."/>
            <person name="Li H."/>
            <person name="Huang H."/>
            <person name="Zhang F."/>
            <person name="Xu H."/>
            <person name="Li N."/>
            <person name="Zhao C."/>
            <person name="Li S."/>
            <person name="Dong L."/>
            <person name="Huang Y."/>
            <person name="Li L."/>
            <person name="Xi Y."/>
            <person name="Qi Q."/>
            <person name="Li W."/>
            <person name="Zhang B."/>
            <person name="Hu W."/>
            <person name="Zhang Y."/>
            <person name="Tian X."/>
            <person name="Jiao Y."/>
            <person name="Liang X."/>
            <person name="Jin J."/>
            <person name="Gao L."/>
            <person name="Zheng W."/>
            <person name="Hao B."/>
            <person name="Liu S.-M."/>
            <person name="Wang W."/>
            <person name="Yuan L."/>
            <person name="Cao M."/>
            <person name="McDermott J."/>
            <person name="Samudrala R."/>
            <person name="Wang J."/>
            <person name="Wong G.K.-S."/>
            <person name="Yang H."/>
        </authorList>
    </citation>
    <scope>NUCLEOTIDE SEQUENCE [LARGE SCALE GENOMIC DNA]</scope>
    <source>
        <strain>cv. 93-11</strain>
    </source>
</reference>
<reference key="3">
    <citation type="journal article" date="2003" name="Plant J.">
        <title>Three rice nicotianamine synthase genes, OsNAS1, OsNAS2, and OsNAS3 are expressed in cells involved in long-distance transport of iron and differentially regulated by iron.</title>
        <authorList>
            <person name="Inoue H."/>
            <person name="Higuchi K."/>
            <person name="Takahashi M."/>
            <person name="Nakanishi H."/>
            <person name="Mori S."/>
            <person name="Nishizawa N.K."/>
        </authorList>
    </citation>
    <scope>FUNCTION</scope>
    <scope>TISSUE SPECIFICITY</scope>
    <scope>INDUCTION</scope>
</reference>
<keyword id="KW-1185">Reference proteome</keyword>
<keyword id="KW-0949">S-adenosyl-L-methionine</keyword>
<keyword id="KW-0808">Transferase</keyword>
<proteinExistence type="evidence at transcript level"/>
<protein>
    <recommendedName>
        <fullName>Nicotianamine synthase 3</fullName>
        <ecNumber>2.5.1.43</ecNumber>
    </recommendedName>
    <alternativeName>
        <fullName>S-adenosyl-L-methionine:S-adenosyl-L-methionine:S-adenosyl-methionine 3-amino-3-carboxypropyltransferase 3</fullName>
        <shortName>OsNAS3</shortName>
    </alternativeName>
</protein>
<organism>
    <name type="scientific">Oryza sativa subsp. indica</name>
    <name type="common">Rice</name>
    <dbReference type="NCBI Taxonomy" id="39946"/>
    <lineage>
        <taxon>Eukaryota</taxon>
        <taxon>Viridiplantae</taxon>
        <taxon>Streptophyta</taxon>
        <taxon>Embryophyta</taxon>
        <taxon>Tracheophyta</taxon>
        <taxon>Spermatophyta</taxon>
        <taxon>Magnoliopsida</taxon>
        <taxon>Liliopsida</taxon>
        <taxon>Poales</taxon>
        <taxon>Poaceae</taxon>
        <taxon>BOP clade</taxon>
        <taxon>Oryzoideae</taxon>
        <taxon>Oryzeae</taxon>
        <taxon>Oryzinae</taxon>
        <taxon>Oryza</taxon>
        <taxon>Oryza sativa</taxon>
    </lineage>
</organism>
<name>NAS3_ORYSI</name>
<accession>A2YQ58</accession>
<accession>Q69UZ9</accession>
<accession>Q9FXW5</accession>
<feature type="chain" id="PRO_0000300240" description="Nicotianamine synthase 3">
    <location>
        <begin position="1"/>
        <end position="343"/>
    </location>
</feature>
<feature type="sequence conflict" description="In Ref. 1; BAB17824." evidence="2" ref="1">
    <original>S</original>
    <variation>T</variation>
    <location>
        <position position="249"/>
    </location>
</feature>
<feature type="sequence conflict" description="In Ref. 1; BAB17824." evidence="2" ref="1">
    <original>KPPVAA</original>
    <variation>NRPWPG</variation>
    <location>
        <begin position="292"/>
        <end position="297"/>
    </location>
</feature>
<sequence length="343" mass="36983">MTVEVEAVTMAKEEQPEEEEVIEKLVEKITGLAAAIGKLPSLSPSPEVNALFTELVMTCIPPSSVDVEQLGAEAQDMRGRLIRLCADAEGHLEAHYSDVLAAHDNPLDHLALFPYFNNYIQLAQLEYALLARHLPAAPPPSRLAFLGSGPLPLSSLVLAARHLPAASFHNYDICADANRRASRLVRADRDLSARMAFHTSDVAHVTTDLAAYDVVFLAALVGMAAEEKARMVEHLGKHMAPGAALVVRSAHGARGFLYPVVDPEEIRRGGFDVLAVHHPEGEVINSVIIARKPPVAAPALEGGDAHAHGHGAVVSRPCQRCEMEARAHQKMEDMSAMEKLPSS</sequence>
<gene>
    <name type="primary">NAS3</name>
    <name type="ORF">OsI_026451</name>
</gene>
<dbReference type="EC" id="2.5.1.43"/>
<dbReference type="EMBL" id="AB023819">
    <property type="protein sequence ID" value="BAB17824.1"/>
    <property type="molecule type" value="mRNA"/>
</dbReference>
<dbReference type="EMBL" id="CM000132">
    <property type="protein sequence ID" value="EAZ05219.1"/>
    <property type="status" value="ALT_INIT"/>
    <property type="molecule type" value="Genomic_DNA"/>
</dbReference>
<dbReference type="SMR" id="A2YQ58"/>
<dbReference type="EnsemblPlants" id="OsGoSa_07g0028280.01">
    <property type="protein sequence ID" value="OsGoSa_07g0028280.01"/>
    <property type="gene ID" value="OsGoSa_07g0028280"/>
</dbReference>
<dbReference type="EnsemblPlants" id="OsIR64_07g0028860.01">
    <property type="protein sequence ID" value="OsIR64_07g0028860.01"/>
    <property type="gene ID" value="OsIR64_07g0028860"/>
</dbReference>
<dbReference type="EnsemblPlants" id="OsKYG_07g0028600.01">
    <property type="protein sequence ID" value="OsKYG_07g0028600.01"/>
    <property type="gene ID" value="OsKYG_07g0028600"/>
</dbReference>
<dbReference type="EnsemblPlants" id="OsLima_07g0028120.01">
    <property type="protein sequence ID" value="OsLima_07g0028120.01"/>
    <property type="gene ID" value="OsLima_07g0028120"/>
</dbReference>
<dbReference type="EnsemblPlants" id="OsLiXu_07g0028630.01">
    <property type="protein sequence ID" value="OsLiXu_07g0028630.01"/>
    <property type="gene ID" value="OsLiXu_07g0028630"/>
</dbReference>
<dbReference type="EnsemblPlants" id="OsMH63_07G028250_01">
    <property type="protein sequence ID" value="OsMH63_07G028250_01"/>
    <property type="gene ID" value="OsMH63_07G028250"/>
</dbReference>
<dbReference type="EnsemblPlants" id="OsZS97_07G027970_01">
    <property type="protein sequence ID" value="OsZS97_07G027970_01"/>
    <property type="gene ID" value="OsZS97_07G027970"/>
</dbReference>
<dbReference type="Gramene" id="OsGoSa_07g0028280.01">
    <property type="protein sequence ID" value="OsGoSa_07g0028280.01"/>
    <property type="gene ID" value="OsGoSa_07g0028280"/>
</dbReference>
<dbReference type="Gramene" id="OsIR64_07g0028860.01">
    <property type="protein sequence ID" value="OsIR64_07g0028860.01"/>
    <property type="gene ID" value="OsIR64_07g0028860"/>
</dbReference>
<dbReference type="Gramene" id="OsKYG_07g0028600.01">
    <property type="protein sequence ID" value="OsKYG_07g0028600.01"/>
    <property type="gene ID" value="OsKYG_07g0028600"/>
</dbReference>
<dbReference type="Gramene" id="OsLima_07g0028120.01">
    <property type="protein sequence ID" value="OsLima_07g0028120.01"/>
    <property type="gene ID" value="OsLima_07g0028120"/>
</dbReference>
<dbReference type="Gramene" id="OsLiXu_07g0028630.01">
    <property type="protein sequence ID" value="OsLiXu_07g0028630.01"/>
    <property type="gene ID" value="OsLiXu_07g0028630"/>
</dbReference>
<dbReference type="Gramene" id="OsMH63_07G028250_01">
    <property type="protein sequence ID" value="OsMH63_07G028250_01"/>
    <property type="gene ID" value="OsMH63_07G028250"/>
</dbReference>
<dbReference type="Gramene" id="OsZS97_07G027970_01">
    <property type="protein sequence ID" value="OsZS97_07G027970_01"/>
    <property type="gene ID" value="OsZS97_07G027970"/>
</dbReference>
<dbReference type="HOGENOM" id="CLU_031919_0_0_1"/>
<dbReference type="OrthoDB" id="1858069at2759"/>
<dbReference type="BioCyc" id="MetaCyc:MONOMER-13939"/>
<dbReference type="BRENDA" id="2.5.1.43">
    <property type="organism ID" value="11590"/>
</dbReference>
<dbReference type="Proteomes" id="UP000007015">
    <property type="component" value="Chromosome 7"/>
</dbReference>
<dbReference type="GO" id="GO:0030410">
    <property type="term" value="F:nicotianamine synthase activity"/>
    <property type="evidence" value="ECO:0007669"/>
    <property type="project" value="UniProtKB-EC"/>
</dbReference>
<dbReference type="GO" id="GO:0030418">
    <property type="term" value="P:nicotianamine biosynthetic process"/>
    <property type="evidence" value="ECO:0007669"/>
    <property type="project" value="InterPro"/>
</dbReference>
<dbReference type="Gene3D" id="3.40.50.150">
    <property type="entry name" value="Vaccinia Virus protein VP39"/>
    <property type="match status" value="1"/>
</dbReference>
<dbReference type="InterPro" id="IPR004298">
    <property type="entry name" value="Nicotian_synth"/>
</dbReference>
<dbReference type="InterPro" id="IPR029063">
    <property type="entry name" value="SAM-dependent_MTases_sf"/>
</dbReference>
<dbReference type="PANTHER" id="PTHR32266">
    <property type="entry name" value="NICOTIANAMINE SYNTHASE 3"/>
    <property type="match status" value="1"/>
</dbReference>
<dbReference type="PANTHER" id="PTHR32266:SF12">
    <property type="entry name" value="NICOTIANAMINE SYNTHASE 3"/>
    <property type="match status" value="1"/>
</dbReference>
<dbReference type="Pfam" id="PF03059">
    <property type="entry name" value="NAS"/>
    <property type="match status" value="1"/>
</dbReference>
<dbReference type="SUPFAM" id="SSF53335">
    <property type="entry name" value="S-adenosyl-L-methionine-dependent methyltransferases"/>
    <property type="match status" value="1"/>
</dbReference>
<dbReference type="PROSITE" id="PS51142">
    <property type="entry name" value="NAS"/>
    <property type="match status" value="1"/>
</dbReference>
<comment type="function">
    <text evidence="1">Synthesizes nicotianamine, a polyamine that is the first intermediate in the synthesis of the phytosiderophores of the mugineic acid type found in gramineae which serve as a sensor for the physiological iron status within the plant, and/or might be involved in the transport of iron.</text>
</comment>
<comment type="catalytic activity">
    <reaction>
        <text>3 S-adenosyl-L-methionine = nicotianamine + 3 S-methyl-5'-thioadenosine + 3 H(+)</text>
        <dbReference type="Rhea" id="RHEA:16481"/>
        <dbReference type="ChEBI" id="CHEBI:15378"/>
        <dbReference type="ChEBI" id="CHEBI:17509"/>
        <dbReference type="ChEBI" id="CHEBI:58249"/>
        <dbReference type="ChEBI" id="CHEBI:59789"/>
        <dbReference type="EC" id="2.5.1.43"/>
    </reaction>
</comment>
<comment type="tissue specificity">
    <text evidence="1">Expressed in leaves.</text>
</comment>
<comment type="induction">
    <text evidence="1">By iron deficiency in roots. Down-regulated in chlorotic leaves by iron deficiency.</text>
</comment>
<comment type="similarity">
    <text evidence="2">Belongs to the nicotianamine synthase (NAS)-like family.</text>
</comment>
<comment type="sequence caution" evidence="2">
    <conflict type="erroneous initiation">
        <sequence resource="EMBL-CDS" id="EAZ05219"/>
    </conflict>
</comment>
<evidence type="ECO:0000269" key="1">
    <source>
    </source>
</evidence>
<evidence type="ECO:0000305" key="2"/>